<organism>
    <name type="scientific">Leptospira interrogans serogroup Icterohaemorrhagiae serovar Lai (strain 56601)</name>
    <dbReference type="NCBI Taxonomy" id="189518"/>
    <lineage>
        <taxon>Bacteria</taxon>
        <taxon>Pseudomonadati</taxon>
        <taxon>Spirochaetota</taxon>
        <taxon>Spirochaetia</taxon>
        <taxon>Leptospirales</taxon>
        <taxon>Leptospiraceae</taxon>
        <taxon>Leptospira</taxon>
    </lineage>
</organism>
<proteinExistence type="inferred from homology"/>
<gene>
    <name type="primary">hsp15</name>
    <name type="ordered locus">LA_1563</name>
</gene>
<accession>Q93TV7</accession>
<keyword id="KW-1185">Reference proteome</keyword>
<keyword id="KW-0346">Stress response</keyword>
<protein>
    <recommendedName>
        <fullName>Probable 15 kDa heat shock protein</fullName>
    </recommendedName>
</protein>
<comment type="similarity">
    <text evidence="1">Belongs to the small heat shock protein (HSP20) family.</text>
</comment>
<name>HSP15_LEPIN</name>
<dbReference type="EMBL" id="AF320330">
    <property type="protein sequence ID" value="AAK51703.1"/>
    <property type="molecule type" value="Genomic_DNA"/>
</dbReference>
<dbReference type="EMBL" id="AE010300">
    <property type="protein sequence ID" value="AAN48762.1"/>
    <property type="molecule type" value="Genomic_DNA"/>
</dbReference>
<dbReference type="RefSeq" id="NP_711744.1">
    <property type="nucleotide sequence ID" value="NC_004342.2"/>
</dbReference>
<dbReference type="RefSeq" id="WP_000180222.1">
    <property type="nucleotide sequence ID" value="NC_004342.2"/>
</dbReference>
<dbReference type="SMR" id="Q93TV7"/>
<dbReference type="STRING" id="189518.LA_1563"/>
<dbReference type="PaxDb" id="189518-LA_1563"/>
<dbReference type="EnsemblBacteria" id="AAN48762">
    <property type="protein sequence ID" value="AAN48762"/>
    <property type="gene ID" value="LA_1563"/>
</dbReference>
<dbReference type="KEGG" id="lil:LA_1563"/>
<dbReference type="PATRIC" id="fig|189518.3.peg.1560"/>
<dbReference type="HOGENOM" id="CLU_046737_9_3_12"/>
<dbReference type="InParanoid" id="Q93TV7"/>
<dbReference type="OrthoDB" id="9792695at2"/>
<dbReference type="Proteomes" id="UP000001408">
    <property type="component" value="Chromosome I"/>
</dbReference>
<dbReference type="CDD" id="cd06464">
    <property type="entry name" value="ACD_sHsps-like"/>
    <property type="match status" value="1"/>
</dbReference>
<dbReference type="Gene3D" id="2.60.40.790">
    <property type="match status" value="1"/>
</dbReference>
<dbReference type="InterPro" id="IPR002068">
    <property type="entry name" value="A-crystallin/Hsp20_dom"/>
</dbReference>
<dbReference type="InterPro" id="IPR007052">
    <property type="entry name" value="CS_dom"/>
</dbReference>
<dbReference type="InterPro" id="IPR008978">
    <property type="entry name" value="HSP20-like_chaperone"/>
</dbReference>
<dbReference type="InterPro" id="IPR031107">
    <property type="entry name" value="Small_HSP"/>
</dbReference>
<dbReference type="PANTHER" id="PTHR11527">
    <property type="entry name" value="HEAT-SHOCK PROTEIN 20 FAMILY MEMBER"/>
    <property type="match status" value="1"/>
</dbReference>
<dbReference type="Pfam" id="PF00011">
    <property type="entry name" value="HSP20"/>
    <property type="match status" value="1"/>
</dbReference>
<dbReference type="SUPFAM" id="SSF49764">
    <property type="entry name" value="HSP20-like chaperones"/>
    <property type="match status" value="1"/>
</dbReference>
<dbReference type="PROSITE" id="PS01031">
    <property type="entry name" value="SHSP"/>
    <property type="match status" value="1"/>
</dbReference>
<reference key="1">
    <citation type="submission" date="2000-11" db="EMBL/GenBank/DDBJ databases">
        <title>Identification of temperature regulated proteins of Leptospira interrogans.</title>
        <authorList>
            <person name="Nally J.E."/>
            <person name="Timoney J.F."/>
            <person name="Artiushin S."/>
        </authorList>
    </citation>
    <scope>NUCLEOTIDE SEQUENCE [GENOMIC DNA]</scope>
</reference>
<reference key="2">
    <citation type="journal article" date="2003" name="Nature">
        <title>Unique physiological and pathogenic features of Leptospira interrogans revealed by whole-genome sequencing.</title>
        <authorList>
            <person name="Ren S.-X."/>
            <person name="Fu G."/>
            <person name="Jiang X.-G."/>
            <person name="Zeng R."/>
            <person name="Miao Y.-G."/>
            <person name="Xu H."/>
            <person name="Zhang Y.-X."/>
            <person name="Xiong H."/>
            <person name="Lu G."/>
            <person name="Lu L.-F."/>
            <person name="Jiang H.-Q."/>
            <person name="Jia J."/>
            <person name="Tu Y.-F."/>
            <person name="Jiang J.-X."/>
            <person name="Gu W.-Y."/>
            <person name="Zhang Y.-Q."/>
            <person name="Cai Z."/>
            <person name="Sheng H.-H."/>
            <person name="Yin H.-F."/>
            <person name="Zhang Y."/>
            <person name="Zhu G.-F."/>
            <person name="Wan M."/>
            <person name="Huang H.-L."/>
            <person name="Qian Z."/>
            <person name="Wang S.-Y."/>
            <person name="Ma W."/>
            <person name="Yao Z.-J."/>
            <person name="Shen Y."/>
            <person name="Qiang B.-Q."/>
            <person name="Xia Q.-C."/>
            <person name="Guo X.-K."/>
            <person name="Danchin A."/>
            <person name="Saint Girons I."/>
            <person name="Somerville R.L."/>
            <person name="Wen Y.-M."/>
            <person name="Shi M.-H."/>
            <person name="Chen Z."/>
            <person name="Xu J.-G."/>
            <person name="Zhao G.-P."/>
        </authorList>
    </citation>
    <scope>NUCLEOTIDE SEQUENCE [LARGE SCALE GENOMIC DNA]</scope>
    <source>
        <strain>56601</strain>
    </source>
</reference>
<evidence type="ECO:0000255" key="1">
    <source>
        <dbReference type="PROSITE-ProRule" id="PRU00285"/>
    </source>
</evidence>
<sequence length="130" mass="15000">MTNAVLNEKNHSVTSEETKKERVRILAPRVDIYSDEENIYLLADLPGVEEKDVQVQLEKDQLIISGKTSNKDIQGELRYSEFRTGEYKRTFTLTESVEEDRISAVYKNGVLNLTLPKRKPLTKKIEVRSE</sequence>
<feature type="chain" id="PRO_0000126052" description="Probable 15 kDa heat shock protein">
    <location>
        <begin position="1"/>
        <end position="130"/>
    </location>
</feature>
<feature type="domain" description="sHSP" evidence="1">
    <location>
        <begin position="21"/>
        <end position="130"/>
    </location>
</feature>